<evidence type="ECO:0000255" key="1"/>
<evidence type="ECO:0000256" key="2">
    <source>
        <dbReference type="SAM" id="MobiDB-lite"/>
    </source>
</evidence>
<evidence type="ECO:0000269" key="3">
    <source>
    </source>
</evidence>
<evidence type="ECO:0000303" key="4">
    <source>
    </source>
</evidence>
<evidence type="ECO:0000305" key="5"/>
<evidence type="ECO:0000312" key="6">
    <source>
        <dbReference type="EMBL" id="AVG44203.1"/>
    </source>
</evidence>
<sequence length="84" mass="9632">MAFLKKSLFLVLFLGIVSLSVCEEEKREGEEKEEKREEEEGKEENEDGNEEHKEKRFLGAILKIGHALAKTVLPMVTNAFKPKQ</sequence>
<dbReference type="EMBL" id="KY748199">
    <property type="protein sequence ID" value="AVG44203.1"/>
    <property type="molecule type" value="mRNA"/>
</dbReference>
<dbReference type="GO" id="GO:0005576">
    <property type="term" value="C:extracellular region"/>
    <property type="evidence" value="ECO:0000314"/>
    <property type="project" value="UniProtKB"/>
</dbReference>
<dbReference type="GO" id="GO:0050829">
    <property type="term" value="P:defense response to Gram-negative bacterium"/>
    <property type="evidence" value="ECO:0000314"/>
    <property type="project" value="UniProtKB"/>
</dbReference>
<dbReference type="GO" id="GO:0050830">
    <property type="term" value="P:defense response to Gram-positive bacterium"/>
    <property type="evidence" value="ECO:0000314"/>
    <property type="project" value="UniProtKB"/>
</dbReference>
<dbReference type="GO" id="GO:0042832">
    <property type="term" value="P:defense response to protozoan"/>
    <property type="evidence" value="ECO:0000314"/>
    <property type="project" value="UniProtKB"/>
</dbReference>
<dbReference type="GO" id="GO:0051607">
    <property type="term" value="P:defense response to virus"/>
    <property type="evidence" value="ECO:0000314"/>
    <property type="project" value="UniProtKB"/>
</dbReference>
<dbReference type="GO" id="GO:0044179">
    <property type="term" value="P:hemolysis in another organism"/>
    <property type="evidence" value="ECO:0000314"/>
    <property type="project" value="UniProtKB"/>
</dbReference>
<dbReference type="GO" id="GO:0045087">
    <property type="term" value="P:innate immune response"/>
    <property type="evidence" value="ECO:0007669"/>
    <property type="project" value="UniProtKB-KW"/>
</dbReference>
<dbReference type="GO" id="GO:0050688">
    <property type="term" value="P:regulation of defense response to virus"/>
    <property type="evidence" value="ECO:0007669"/>
    <property type="project" value="UniProtKB-KW"/>
</dbReference>
<dbReference type="InterPro" id="IPR004275">
    <property type="entry name" value="Frog_antimicrobial_propeptide"/>
</dbReference>
<dbReference type="Pfam" id="PF03032">
    <property type="entry name" value="FSAP_sig_propep"/>
    <property type="match status" value="1"/>
</dbReference>
<keyword id="KW-0878">Amphibian defense peptide</keyword>
<keyword id="KW-0044">Antibiotic</keyword>
<keyword id="KW-0929">Antimicrobial</keyword>
<keyword id="KW-0930">Antiviral protein</keyword>
<keyword id="KW-0165">Cleavage on pair of basic residues</keyword>
<keyword id="KW-0204">Cytolysis</keyword>
<keyword id="KW-0903">Direct protein sequencing</keyword>
<keyword id="KW-0354">Hemolysis</keyword>
<keyword id="KW-0391">Immunity</keyword>
<keyword id="KW-0399">Innate immunity</keyword>
<keyword id="KW-0964">Secreted</keyword>
<keyword id="KW-0732">Signal</keyword>
<proteinExistence type="evidence at protein level"/>
<reference evidence="6" key="1">
    <citation type="submission" date="2017-03" db="EMBL/GenBank/DDBJ databases">
        <title>Response of Hypsiboas raniceps to abiotic and biotic stresses: gene expression and MALDI-mass spectrometry imaging analysis of skin peptides.</title>
        <authorList>
            <person name="Barbosa E.A."/>
            <person name="Campos P.F."/>
            <person name="Andrade A.C."/>
            <person name="Bloch C."/>
        </authorList>
    </citation>
    <scope>NUCLEOTIDE SEQUENCE [MRNA]</scope>
</reference>
<reference evidence="5" key="2">
    <citation type="journal article" date="2020" name="Biomolecules">
        <title>Biological Properties of a Novel Multifunctional Host Defense Peptide from the Skin Secretion of the Chaco Tree Frog, Boana raniceps.</title>
        <authorList>
            <person name="Santana C.J.C."/>
            <person name="Magalhaes A.C.M."/>
            <person name="Prias-Marquez C.A."/>
            <person name="Falico D.A."/>
            <person name="Dos Santos Junior A.C.M."/>
            <person name="Lima B.D."/>
            <person name="Ricart C.A.O."/>
            <person name="de Pilger D.R.B."/>
            <person name="Bonotto R.M."/>
            <person name="Moraes C.B."/>
            <person name="Freitas-Junior L.H."/>
            <person name="Alvares A.D.C.M."/>
            <person name="Freitas S.M."/>
            <person name="Luz I.S."/>
            <person name="Pires O.R. Jr."/>
            <person name="Fontes W."/>
            <person name="Castro M.S."/>
        </authorList>
    </citation>
    <scope>PROTEIN SEQUENCE OF 57-84</scope>
    <scope>FUNCTION</scope>
    <scope>SUBCELLULAR LOCATION</scope>
    <scope>TISSUE SPECIFICITY</scope>
    <scope>MASS SPECTROMETRY</scope>
    <source>
        <tissue evidence="4">Skin secretion</tissue>
    </source>
</reference>
<organism evidence="6">
    <name type="scientific">Boana raniceps</name>
    <name type="common">Chaco tree frog</name>
    <name type="synonym">Hyla roeschmanni</name>
    <dbReference type="NCBI Taxonomy" id="192750"/>
    <lineage>
        <taxon>Eukaryota</taxon>
        <taxon>Metazoa</taxon>
        <taxon>Chordata</taxon>
        <taxon>Craniata</taxon>
        <taxon>Vertebrata</taxon>
        <taxon>Euteleostomi</taxon>
        <taxon>Amphibia</taxon>
        <taxon>Batrachia</taxon>
        <taxon>Anura</taxon>
        <taxon>Neobatrachia</taxon>
        <taxon>Hyloidea</taxon>
        <taxon>Hylidae</taxon>
        <taxon>Hylinae</taxon>
        <taxon>Cophomantini</taxon>
        <taxon>Boana</taxon>
    </lineage>
</organism>
<feature type="signal peptide" evidence="1">
    <location>
        <begin position="1"/>
        <end position="22"/>
    </location>
</feature>
<feature type="propeptide" id="PRO_0000455245" evidence="3">
    <location>
        <begin position="23"/>
        <end position="54"/>
    </location>
</feature>
<feature type="peptide" id="PRO_0000455246" description="Figainin 2" evidence="3">
    <location>
        <begin position="57"/>
        <end position="84"/>
    </location>
</feature>
<feature type="region of interest" description="Disordered" evidence="2">
    <location>
        <begin position="23"/>
        <end position="53"/>
    </location>
</feature>
<feature type="compositionally biased region" description="Basic and acidic residues" evidence="2">
    <location>
        <begin position="23"/>
        <end position="39"/>
    </location>
</feature>
<feature type="compositionally biased region" description="Acidic residues" evidence="2">
    <location>
        <begin position="40"/>
        <end position="49"/>
    </location>
</feature>
<protein>
    <recommendedName>
        <fullName evidence="4">Figainin 2</fullName>
    </recommendedName>
    <alternativeName>
        <fullName evidence="4">Br22</fullName>
    </alternativeName>
</protein>
<comment type="function">
    <text evidence="3">Antimicrobial peptide that displays antibacterial, antiprotozoal, and antiviral activity (PubMed:32443921). Exhibits antibacterial activity against the Gram-positive bacteria S.epidermidis ATCC 12228 (MIC=4 uM), E.casseliflavus ATCC 700327 (MIC=4 uM), S.aureus ATCC 25923 (MIC=8 uM) and E.faecalis ATCC 29212 (MIC=8 uM), and the Gram-negative bacteria E.coli ATCC 25922 (MIC=8 uM), K.pneumoniae ATCC 13883 (MIC=8 uM), the multi-resistant clinical isolate strain K.pneumoniae carbapanemase (KPC) MR (MIC=16 uM), and P.aeruginosa ATCC 27853 (MIC=32 uM) (PubMed:32443921). Displays antiprotozoal activity against the epimastigote form of T.cruzi (IC(50)=6.32 uM) (PubMed:32443921). Does not show antimicrobial against the fungi C.albicans ATCC 90028 and C.parapsilosis ATCC 22019 (PubMed:32443921). Displays antiviral activity against the human viruses chikungunya (EC(50)=17.9 uM), Dengue serotype 4 (EC(50)=20.8 uM) and Yellow Fever (EC(50)=21.8 uM) (PubMed:32443921). Shows moderate cytolytic activity against human erythrocytes (HC(50)=48.9 uM), and activates the oxidative burst in human neutrophils (PubMed:32443921). Also displays anti-proliferative effects against MCF-7 breast cancer cells (IC(50)=15.3 uM) and B16F10 murine melanoma cells (IC(50)=12.8 uM) (PubMed:32443921).</text>
</comment>
<comment type="subcellular location">
    <subcellularLocation>
        <location evidence="3">Secreted</location>
    </subcellularLocation>
</comment>
<comment type="tissue specificity">
    <text evidence="3">Expressed by the skin glands.</text>
</comment>
<comment type="mass spectrometry" mass="3006.77" method="MALDI" evidence="3"/>
<comment type="similarity">
    <text evidence="5">Belongs to the frog skin active peptide (FSAP) family.</text>
</comment>
<accession>A0A2L2DDD0</accession>
<name>FIG02_BOARA</name>